<name>CPL5_ARATH</name>
<comment type="function">
    <text evidence="3">Mediates the dephosphorylation of 'Ser-2' of the heptad repeats YSPTSPS in the C-terminal domain of the largest RNA polymerase II subunit (RPB1). This promotes the activity of RNA polymerase II. Positively regulates abscisic acid (ABA) and drought responses, including the regulation of specific genes expression.</text>
</comment>
<comment type="catalytic activity">
    <reaction evidence="3">
        <text>O-phospho-L-seryl-[protein] + H2O = L-seryl-[protein] + phosphate</text>
        <dbReference type="Rhea" id="RHEA:20629"/>
        <dbReference type="Rhea" id="RHEA-COMP:9863"/>
        <dbReference type="Rhea" id="RHEA-COMP:11604"/>
        <dbReference type="ChEBI" id="CHEBI:15377"/>
        <dbReference type="ChEBI" id="CHEBI:29999"/>
        <dbReference type="ChEBI" id="CHEBI:43474"/>
        <dbReference type="ChEBI" id="CHEBI:83421"/>
        <dbReference type="EC" id="3.1.3.16"/>
    </reaction>
</comment>
<comment type="catalytic activity">
    <reaction evidence="3">
        <text>O-phospho-L-threonyl-[protein] + H2O = L-threonyl-[protein] + phosphate</text>
        <dbReference type="Rhea" id="RHEA:47004"/>
        <dbReference type="Rhea" id="RHEA-COMP:11060"/>
        <dbReference type="Rhea" id="RHEA-COMP:11605"/>
        <dbReference type="ChEBI" id="CHEBI:15377"/>
        <dbReference type="ChEBI" id="CHEBI:30013"/>
        <dbReference type="ChEBI" id="CHEBI:43474"/>
        <dbReference type="ChEBI" id="CHEBI:61977"/>
        <dbReference type="EC" id="3.1.3.16"/>
    </reaction>
</comment>
<comment type="subcellular location">
    <subcellularLocation>
        <location evidence="3">Nucleus</location>
    </subcellularLocation>
</comment>
<comment type="tissue specificity">
    <text evidence="3">Expressed in roots, seedlings, hypocotyls, cotyledons, leaves, siliques and flowers.</text>
</comment>
<comment type="developmental stage">
    <text evidence="3">In the vegetative stage, first detected in the seed coat upon germination and in the hypocotyl of young seedlings. In seedlings, expressed in roots (mostly in primary roots), hypocotyl, rosette leaves and cotyledons. In rosette leaves, observed in the vascular tissue of major veins, guard cells and trichomes. During the reproductive stage, expressed in flower buds, stems, stamens, carpels and funiculi of siliques.</text>
</comment>
<comment type="induction">
    <text evidence="3">Induced transiently by abscisic acid (ABA), salt (NaCl), cold and drought.</text>
</comment>
<comment type="disruption phenotype">
    <text evidence="3">Weak abscisic acid (ABA) hyposensitivity during the early stages of seedling development. Slighty decreased drought stress tolerance.</text>
</comment>
<comment type="sequence caution" evidence="5">
    <conflict type="erroneous gene model prediction">
        <sequence resource="EMBL-CDS" id="AEE76264"/>
    </conflict>
    <text>The predicted split genes At3g19595 and At3g19600 have been merged into a single gene: At3g19600.</text>
</comment>
<comment type="sequence caution" evidence="5">
    <conflict type="erroneous gene model prediction">
        <sequence resource="EMBL-CDS" id="BAB02544"/>
    </conflict>
    <text>The predicted split genes At3g19595 and At3g19600 have been merged into a single gene: At3g19600.</text>
</comment>
<comment type="sequence caution" evidence="5">
    <conflict type="erroneous gene model prediction">
        <sequence resource="EMBL-CDS" id="BAB02545"/>
    </conflict>
</comment>
<proteinExistence type="evidence at protein level"/>
<accession>F4JCB2</accession>
<accession>C0LW35</accession>
<accession>Q9LJN6</accession>
<accession>Q9LJN7</accession>
<evidence type="ECO:0000255" key="1">
    <source>
        <dbReference type="PROSITE-ProRule" id="PRU00336"/>
    </source>
</evidence>
<evidence type="ECO:0000256" key="2">
    <source>
        <dbReference type="SAM" id="MobiDB-lite"/>
    </source>
</evidence>
<evidence type="ECO:0000269" key="3">
    <source>
    </source>
</evidence>
<evidence type="ECO:0000303" key="4">
    <source>
    </source>
</evidence>
<evidence type="ECO:0000305" key="5"/>
<evidence type="ECO:0000312" key="6">
    <source>
        <dbReference type="Araport" id="AT3G19600"/>
    </source>
</evidence>
<evidence type="ECO:0000312" key="7">
    <source>
        <dbReference type="EMBL" id="BAB02544.1"/>
    </source>
</evidence>
<evidence type="ECO:0000312" key="8">
    <source>
        <dbReference type="EMBL" id="BAB02545.1"/>
    </source>
</evidence>
<keyword id="KW-0938">Abscisic acid signaling pathway</keyword>
<keyword id="KW-0010">Activator</keyword>
<keyword id="KW-0378">Hydrolase</keyword>
<keyword id="KW-0539">Nucleus</keyword>
<keyword id="KW-1185">Reference proteome</keyword>
<keyword id="KW-0346">Stress response</keyword>
<keyword id="KW-0804">Transcription</keyword>
<keyword id="KW-0805">Transcription regulation</keyword>
<organism>
    <name type="scientific">Arabidopsis thaliana</name>
    <name type="common">Mouse-ear cress</name>
    <dbReference type="NCBI Taxonomy" id="3702"/>
    <lineage>
        <taxon>Eukaryota</taxon>
        <taxon>Viridiplantae</taxon>
        <taxon>Streptophyta</taxon>
        <taxon>Embryophyta</taxon>
        <taxon>Tracheophyta</taxon>
        <taxon>Spermatophyta</taxon>
        <taxon>Magnoliopsida</taxon>
        <taxon>eudicotyledons</taxon>
        <taxon>Gunneridae</taxon>
        <taxon>Pentapetalae</taxon>
        <taxon>rosids</taxon>
        <taxon>malvids</taxon>
        <taxon>Brassicales</taxon>
        <taxon>Brassicaceae</taxon>
        <taxon>Camelineae</taxon>
        <taxon>Arabidopsis</taxon>
    </lineage>
</organism>
<feature type="chain" id="PRO_0000445685" description="RNA polymerase II C-terminal domain phosphatase-like 5">
    <location>
        <begin position="1"/>
        <end position="601"/>
    </location>
</feature>
<feature type="domain" description="FCP1 homology 1" evidence="1">
    <location>
        <begin position="84"/>
        <end position="259"/>
    </location>
</feature>
<feature type="domain" description="FCP1 homology 2" evidence="1">
    <location>
        <begin position="381"/>
        <end position="553"/>
    </location>
</feature>
<feature type="region of interest" description="Disordered" evidence="2">
    <location>
        <begin position="1"/>
        <end position="20"/>
    </location>
</feature>
<feature type="compositionally biased region" description="Basic and acidic residues" evidence="2">
    <location>
        <begin position="8"/>
        <end position="20"/>
    </location>
</feature>
<sequence>MFVAKNLSPERESKRQKKEPEIMEPSFPLLSPNNCGHWYIRYGFCIVCKSTVDKTIEGRVFDGLHLSSEALALTKRLITKFSCLNMKKLHLVLDLDLTLIHSVRVPCLSEAEKYLIEEAGSTTREDLWKMKVRGDPISITIEHLVKLRPFLCEFLKEANEMFTMYVYTKGTRPYAEAILKLIDPKKLYFGHRVITRNESPHTKTLDMVLADERGVVIVDDTRKAWPNNKSNLVLIGRYNYFRSQSRVLKPHSEEKTDESENNGGLANVLKLLKGIHHKFFKVEEEVESQDVRLTMSVVENFSSEPKAKRRKIEPTINESSSSLSSSSSCGHWYICHGICIGCKSTVKKSQGRAFDYIFDGLQLSHEAVALTKCFTTKLSCLNEKKLHLVLDLDHTLLHTVMVPSLSQAEKYLIEEAGSATRDDLWKIKAVGDPMEFLTKLRPFLRDFLKEANEFFTMYVYTKGSRVYAKQVLELIDPKKLYFGDRVITKTESPHMKTLDFVLAEERGVVIVDDTRNVWPDHKSNLVDISKYSYFRLKGQDSMPYSEEKTDESESEGGLANVLKLLKEVHQRFFRVEEELESKDVRSLLQEIDFELNVESVE</sequence>
<reference key="1">
    <citation type="journal article" date="2011" name="New Phytol.">
        <title>AtCPL5, a novel Ser-2-specific RNA polymerase II C-terminal domain phosphatase, positively regulates ABA and drought responses in Arabidopsis.</title>
        <authorList>
            <person name="Jin Y.-M."/>
            <person name="Jung J."/>
            <person name="Jeon H."/>
            <person name="Won S.Y."/>
            <person name="Feng Y."/>
            <person name="Kang J.-S."/>
            <person name="Lee S.Y."/>
            <person name="Cheong J.-J."/>
            <person name="Koiwa H."/>
            <person name="Kim M."/>
        </authorList>
    </citation>
    <scope>NUCLEOTIDE SEQUENCE [MRNA]</scope>
    <scope>FUNCTION</scope>
    <scope>DISRUPTION PHENOTYPE</scope>
    <scope>TISSUE SPECIFICITY</scope>
    <scope>SUBCELLULAR LOCATION</scope>
    <scope>INDUCTION BY ABSCISIC ACID; SALT; COLD AND DROUGHT</scope>
    <scope>CATALYTIC ACTIVITY</scope>
    <scope>DEVELOPMENTAL STAGE</scope>
    <source>
        <strain>cv. Columbia</strain>
    </source>
</reference>
<reference key="2">
    <citation type="journal article" date="2000" name="DNA Res.">
        <title>Structural analysis of Arabidopsis thaliana chromosome 3. II. Sequence features of the 4,251,695 bp regions covered by 90 P1, TAC and BAC clones.</title>
        <authorList>
            <person name="Kaneko T."/>
            <person name="Katoh T."/>
            <person name="Sato S."/>
            <person name="Nakamura Y."/>
            <person name="Asamizu E."/>
            <person name="Tabata S."/>
        </authorList>
    </citation>
    <scope>NUCLEOTIDE SEQUENCE [LARGE SCALE GENOMIC DNA]</scope>
    <source>
        <strain>cv. Columbia</strain>
    </source>
</reference>
<reference key="3">
    <citation type="journal article" date="2017" name="Plant J.">
        <title>Araport11: a complete reannotation of the Arabidopsis thaliana reference genome.</title>
        <authorList>
            <person name="Cheng C.Y."/>
            <person name="Krishnakumar V."/>
            <person name="Chan A.P."/>
            <person name="Thibaud-Nissen F."/>
            <person name="Schobel S."/>
            <person name="Town C.D."/>
        </authorList>
    </citation>
    <scope>GENOME REANNOTATION</scope>
    <source>
        <strain>cv. Columbia</strain>
    </source>
</reference>
<dbReference type="EC" id="3.1.3.16" evidence="3"/>
<dbReference type="EMBL" id="FJ773993">
    <property type="protein sequence ID" value="ACN81954.1"/>
    <property type="molecule type" value="mRNA"/>
</dbReference>
<dbReference type="EMBL" id="AP000417">
    <property type="protein sequence ID" value="BAB02544.1"/>
    <property type="status" value="ALT_SEQ"/>
    <property type="molecule type" value="Genomic_DNA"/>
</dbReference>
<dbReference type="EMBL" id="AP000417">
    <property type="protein sequence ID" value="BAB02545.1"/>
    <property type="status" value="ALT_SEQ"/>
    <property type="molecule type" value="Genomic_DNA"/>
</dbReference>
<dbReference type="EMBL" id="CP002686">
    <property type="protein sequence ID" value="AEE76264.1"/>
    <property type="status" value="ALT_SEQ"/>
    <property type="molecule type" value="Genomic_DNA"/>
</dbReference>
<dbReference type="EMBL" id="CP002686">
    <property type="protein sequence ID" value="AEE76265.2"/>
    <property type="molecule type" value="Genomic_DNA"/>
</dbReference>
<dbReference type="PIR" id="T52387">
    <property type="entry name" value="T52387"/>
</dbReference>
<dbReference type="PIR" id="T52388">
    <property type="entry name" value="T52388"/>
</dbReference>
<dbReference type="RefSeq" id="NP_001118664.1">
    <property type="nucleotide sequence ID" value="NM_001125192.1"/>
</dbReference>
<dbReference type="RefSeq" id="NP_001319592.1">
    <property type="nucleotide sequence ID" value="NM_001338410.1"/>
</dbReference>
<dbReference type="SMR" id="F4JCB2"/>
<dbReference type="STRING" id="3702.F4JCB2"/>
<dbReference type="PaxDb" id="3702-AT3G19595.1"/>
<dbReference type="DNASU" id="6241385"/>
<dbReference type="EnsemblPlants" id="AT3G19600.1">
    <property type="protein sequence ID" value="AT3G19600.1"/>
    <property type="gene ID" value="AT3G19600"/>
</dbReference>
<dbReference type="GeneID" id="821497"/>
<dbReference type="Gramene" id="AT3G19600.1">
    <property type="protein sequence ID" value="AT3G19600.1"/>
    <property type="gene ID" value="AT3G19600"/>
</dbReference>
<dbReference type="KEGG" id="ath:AT3G19595"/>
<dbReference type="KEGG" id="ath:AT3G19600"/>
<dbReference type="Araport" id="AT3G19600"/>
<dbReference type="TAIR" id="AT3G19600">
    <property type="gene designation" value="CPL5"/>
</dbReference>
<dbReference type="eggNOG" id="KOG0323">
    <property type="taxonomic scope" value="Eukaryota"/>
</dbReference>
<dbReference type="HOGENOM" id="CLU_023960_0_0_1"/>
<dbReference type="InParanoid" id="F4JCB2"/>
<dbReference type="OMA" id="GWASEME"/>
<dbReference type="PRO" id="PR:F4JCB2"/>
<dbReference type="Proteomes" id="UP000006548">
    <property type="component" value="Chromosome 3"/>
</dbReference>
<dbReference type="ExpressionAtlas" id="F4JCB2">
    <property type="expression patterns" value="baseline and differential"/>
</dbReference>
<dbReference type="GO" id="GO:0005634">
    <property type="term" value="C:nucleus"/>
    <property type="evidence" value="ECO:0000314"/>
    <property type="project" value="TAIR"/>
</dbReference>
<dbReference type="GO" id="GO:0008420">
    <property type="term" value="F:RNA polymerase II CTD heptapeptide repeat phosphatase activity"/>
    <property type="evidence" value="ECO:0000314"/>
    <property type="project" value="TAIR"/>
</dbReference>
<dbReference type="GO" id="GO:0009738">
    <property type="term" value="P:abscisic acid-activated signaling pathway"/>
    <property type="evidence" value="ECO:0007669"/>
    <property type="project" value="UniProtKB-KW"/>
</dbReference>
<dbReference type="GO" id="GO:0009737">
    <property type="term" value="P:response to abscisic acid"/>
    <property type="evidence" value="ECO:0000315"/>
    <property type="project" value="TAIR"/>
</dbReference>
<dbReference type="GO" id="GO:0009409">
    <property type="term" value="P:response to cold"/>
    <property type="evidence" value="ECO:0000270"/>
    <property type="project" value="UniProtKB"/>
</dbReference>
<dbReference type="GO" id="GO:1902074">
    <property type="term" value="P:response to salt"/>
    <property type="evidence" value="ECO:0000270"/>
    <property type="project" value="UniProtKB"/>
</dbReference>
<dbReference type="GO" id="GO:0009414">
    <property type="term" value="P:response to water deprivation"/>
    <property type="evidence" value="ECO:0000315"/>
    <property type="project" value="TAIR"/>
</dbReference>
<dbReference type="CDD" id="cd07521">
    <property type="entry name" value="HAD_FCP1-like"/>
    <property type="match status" value="2"/>
</dbReference>
<dbReference type="FunFam" id="3.40.50.1000:FF:000235">
    <property type="entry name" value="Haloacid dehalogenase-like hydrolase (HAD) superfamily protein"/>
    <property type="match status" value="2"/>
</dbReference>
<dbReference type="Gene3D" id="3.40.50.1000">
    <property type="entry name" value="HAD superfamily/HAD-like"/>
    <property type="match status" value="2"/>
</dbReference>
<dbReference type="InterPro" id="IPR039189">
    <property type="entry name" value="Fcp1"/>
</dbReference>
<dbReference type="InterPro" id="IPR004274">
    <property type="entry name" value="FCP1_dom"/>
</dbReference>
<dbReference type="InterPro" id="IPR011947">
    <property type="entry name" value="FCP1_euk"/>
</dbReference>
<dbReference type="InterPro" id="IPR036412">
    <property type="entry name" value="HAD-like_sf"/>
</dbReference>
<dbReference type="InterPro" id="IPR023214">
    <property type="entry name" value="HAD_sf"/>
</dbReference>
<dbReference type="NCBIfam" id="TIGR02250">
    <property type="entry name" value="FCP1_euk"/>
    <property type="match status" value="2"/>
</dbReference>
<dbReference type="PANTHER" id="PTHR23081:SF21">
    <property type="entry name" value="RNA POLYMERASE II C-TERMINAL DOMAIN PHOSPHATASE-LIKE-RELATED"/>
    <property type="match status" value="1"/>
</dbReference>
<dbReference type="PANTHER" id="PTHR23081">
    <property type="entry name" value="RNA POLYMERASE II CTD PHOSPHATASE"/>
    <property type="match status" value="1"/>
</dbReference>
<dbReference type="Pfam" id="PF03031">
    <property type="entry name" value="NIF"/>
    <property type="match status" value="2"/>
</dbReference>
<dbReference type="SMART" id="SM00577">
    <property type="entry name" value="CPDc"/>
    <property type="match status" value="2"/>
</dbReference>
<dbReference type="SUPFAM" id="SSF56784">
    <property type="entry name" value="HAD-like"/>
    <property type="match status" value="2"/>
</dbReference>
<dbReference type="PROSITE" id="PS50969">
    <property type="entry name" value="FCP1"/>
    <property type="match status" value="2"/>
</dbReference>
<gene>
    <name evidence="4" type="primary">CPL5</name>
    <name evidence="6" type="ordered locus">At3g19600</name>
    <name evidence="7" type="ORF">MMB12.6</name>
    <name evidence="8" type="ORF">MMB12.7</name>
</gene>
<protein>
    <recommendedName>
        <fullName evidence="4">RNA polymerase II C-terminal domain phosphatase-like 5</fullName>
        <shortName evidence="4">FCP-like 5</shortName>
        <ecNumber evidence="3">3.1.3.16</ecNumber>
    </recommendedName>
    <alternativeName>
        <fullName evidence="4">Carboxyl-terminal phosphatase-like 5</fullName>
        <shortName evidence="4">AtCPL5</shortName>
        <shortName evidence="4">CTD phosphatase-like 5</shortName>
    </alternativeName>
</protein>